<organism>
    <name type="scientific">Human herpesvirus 1 (strain KOS)</name>
    <name type="common">HHV-1</name>
    <name type="synonym">Human herpes simplex virus 1</name>
    <dbReference type="NCBI Taxonomy" id="10306"/>
    <lineage>
        <taxon>Viruses</taxon>
        <taxon>Duplodnaviria</taxon>
        <taxon>Heunggongvirae</taxon>
        <taxon>Peploviricota</taxon>
        <taxon>Herviviricetes</taxon>
        <taxon>Herpesvirales</taxon>
        <taxon>Orthoherpesviridae</taxon>
        <taxon>Alphaherpesvirinae</taxon>
        <taxon>Simplexvirus</taxon>
        <taxon>Simplexvirus humanalpha1</taxon>
        <taxon>Human herpesvirus 1</taxon>
    </lineage>
</organism>
<reference key="1">
    <citation type="journal article" date="1992" name="Arch. Virol.">
        <title>Herpes simplex virus type 1 (HSV-1) HSZP interferes also after antibody neutralization with early shutoff of host protein synthesis induced by HSV-1 KOS.</title>
        <authorList>
            <person name="Matis J."/>
            <person name="Krivjanska M."/>
            <person name="Rajcani J."/>
        </authorList>
    </citation>
    <scope>NUCLEOTIDE SEQUENCE [GENOMIC DNA]</scope>
</reference>
<reference key="2">
    <citation type="journal article" date="1997" name="J. Virol.">
        <title>Mutational analysis of the virion host shutoff gene (UL41) of herpes simplex virus (HSV): characterization of HSV type 1 (HSV-1)/HSV-2 chimeras.</title>
        <authorList>
            <person name="Everly D.N. Jr."/>
            <person name="Read G.S."/>
        </authorList>
    </citation>
    <scope>NUCLEOTIDE SEQUENCE [GENOMIC DNA]</scope>
</reference>
<reference key="3">
    <citation type="journal article" date="1997" name="Virus Genes">
        <title>Herpes simplex virus type 1 (HSV-1) strain HSZP host shutoff gene: nucleotide sequence and comparison with HSV-1 strains differing in early shutoff of host protein synthesis.</title>
        <authorList>
            <person name="Vojvodova A."/>
            <person name="Matis J."/>
            <person name="Kudelova M."/>
            <person name="Rajcani J."/>
        </authorList>
    </citation>
    <scope>NUCLEOTIDE SEQUENCE [GENOMIC DNA]</scope>
</reference>
<reference key="4">
    <citation type="journal article" date="2001" name="J. Virol.">
        <title>mRNA decay during herpesvirus infections: interaction between a putative viral nuclease and a cellular translation factor.</title>
        <authorList>
            <person name="Feng P."/>
            <person name="Everly D.N. Jr."/>
            <person name="Read G.S."/>
        </authorList>
    </citation>
    <scope>INTERACTION WITH HUMAN EIF4H</scope>
</reference>
<reference key="5">
    <citation type="journal article" date="2005" name="J. Virol.">
        <title>mRNA decay during herpes simplex virus (HSV) infections: protein-protein interactions involving the HSV virion host shutoff protein and translation factors eIF4H and eIF4A.</title>
        <authorList>
            <person name="Feng P."/>
            <person name="Everly D.N. Jr."/>
            <person name="Read G.S."/>
        </authorList>
    </citation>
    <scope>INTERACTION WITH HUMAN EIF4A2 AND EIF4H</scope>
    <scope>MUTAGENESIS OF ASP-34; ASP-82; GLU-192; ASP-194; ASP-195; THR-211; ASP-213; THR-214; ASP-215; ASP-261 AND ARG-435</scope>
</reference>
<reference key="6">
    <citation type="journal article" date="2017" name="J. Virol.">
        <title>Herpes simplex virus 1 abrogates the cGAS/STING-mediated Cytosolic DNA-Sensing Pathway via its virion host shutoff protein, UL41.</title>
        <authorList>
            <person name="Su C."/>
            <person name="Zheng C."/>
        </authorList>
    </citation>
    <scope>FUNCTION</scope>
</reference>
<sequence length="489" mass="54952">MGLFGMMKFAHTHHLVKRQGLGAPAGYFTPIAVDLWNVMYTLVVKYQRRYPSYDREAITLHCLCRLLKVFTQKSLFPIFVTDRGVNCMEPVVFGAKAILARTTAQCRTDEEASDVDASPPPSPITDSRPSSAFSNMRRRGTSLASGTRGTAGSGAALPSAAPSKPALRLAHLFCIRVLRALGYAYINSGQLEADDACANLYHTNTVAYVYTTDTDLLLMGCDIVLDISACYIPTINCRDILKYFKMSYPQFLALFVRCHTDLHPNNTYASVEDVLRECHWTPPSRSQTRRAIRREHTSSRSTETRPPLPPAAGGTEMRVSWTEILTQQIAGGYEDDEDLPLDPRDVTGGHPGPRSSSSEILTPPELVQVPNAQLLEEHRSYVASRRRHVIHDAPESLDWLPDPMTITELVEHRYIKYVISLIGPKERGPWTLLKRLPIYQDIRDENLARSIVTRHITAPDIADRFLEQLRTQAPPPAFYKDVLAKFWDE</sequence>
<accession>Q82171</accession>
<accession>Q77ZF2</accession>
<keyword id="KW-1132">Decay of host mRNAs by virus</keyword>
<keyword id="KW-0255">Endonuclease</keyword>
<keyword id="KW-1262">Eukaryotic host gene expression shutoff by virus</keyword>
<keyword id="KW-1190">Host gene expression shutoff by virus</keyword>
<keyword id="KW-1192">Host mRNA suppression by virus</keyword>
<keyword id="KW-0945">Host-virus interaction</keyword>
<keyword id="KW-0378">Hydrolase</keyword>
<keyword id="KW-1090">Inhibition of host innate immune response by virus</keyword>
<keyword id="KW-0922">Interferon antiviral system evasion</keyword>
<keyword id="KW-0426">Late protein</keyword>
<keyword id="KW-0540">Nuclease</keyword>
<keyword id="KW-0694">RNA-binding</keyword>
<keyword id="KW-0899">Viral immunoevasion</keyword>
<keyword id="KW-0946">Virion</keyword>
<dbReference type="EC" id="3.1.27.-"/>
<dbReference type="EMBL" id="Z72338">
    <property type="protein sequence ID" value="CAA96525.1"/>
    <property type="molecule type" value="Genomic_DNA"/>
</dbReference>
<dbReference type="EMBL" id="AF007815">
    <property type="protein sequence ID" value="AAC58446.1"/>
    <property type="molecule type" value="Genomic_DNA"/>
</dbReference>
<dbReference type="GO" id="GO:0044423">
    <property type="term" value="C:virion component"/>
    <property type="evidence" value="ECO:0007669"/>
    <property type="project" value="UniProtKB-KW"/>
</dbReference>
<dbReference type="GO" id="GO:0004519">
    <property type="term" value="F:endonuclease activity"/>
    <property type="evidence" value="ECO:0007669"/>
    <property type="project" value="UniProtKB-KW"/>
</dbReference>
<dbReference type="GO" id="GO:0003723">
    <property type="term" value="F:RNA binding"/>
    <property type="evidence" value="ECO:0007669"/>
    <property type="project" value="UniProtKB-KW"/>
</dbReference>
<dbReference type="GO" id="GO:0004540">
    <property type="term" value="F:RNA nuclease activity"/>
    <property type="evidence" value="ECO:0000304"/>
    <property type="project" value="AgBase"/>
</dbReference>
<dbReference type="GO" id="GO:0039595">
    <property type="term" value="P:symbiont-mediated degradation of host mRNA"/>
    <property type="evidence" value="ECO:0007669"/>
    <property type="project" value="UniProtKB-KW"/>
</dbReference>
<dbReference type="GO" id="GO:0039657">
    <property type="term" value="P:symbiont-mediated suppression of host gene expression"/>
    <property type="evidence" value="ECO:0007669"/>
    <property type="project" value="UniProtKB-KW"/>
</dbReference>
<dbReference type="GO" id="GO:0052170">
    <property type="term" value="P:symbiont-mediated suppression of host innate immune response"/>
    <property type="evidence" value="ECO:0007669"/>
    <property type="project" value="UniProtKB-KW"/>
</dbReference>
<dbReference type="Gene3D" id="3.40.50.1010">
    <property type="entry name" value="5'-nuclease"/>
    <property type="match status" value="1"/>
</dbReference>
<dbReference type="InterPro" id="IPR029060">
    <property type="entry name" value="PIN-like_dom_sf"/>
</dbReference>
<dbReference type="InterPro" id="IPR006086">
    <property type="entry name" value="XPG-I_dom"/>
</dbReference>
<dbReference type="Pfam" id="PF00867">
    <property type="entry name" value="XPG_I"/>
    <property type="match status" value="1"/>
</dbReference>
<dbReference type="SUPFAM" id="SSF88723">
    <property type="entry name" value="PIN domain-like"/>
    <property type="match status" value="1"/>
</dbReference>
<evidence type="ECO:0000250" key="1"/>
<evidence type="ECO:0000256" key="2">
    <source>
        <dbReference type="SAM" id="MobiDB-lite"/>
    </source>
</evidence>
<evidence type="ECO:0000269" key="3">
    <source>
    </source>
</evidence>
<evidence type="ECO:0000269" key="4">
    <source>
    </source>
</evidence>
<evidence type="ECO:0000305" key="5"/>
<gene>
    <name type="primary">UL41</name>
</gene>
<comment type="function">
    <text evidence="4">Minor structural protein that acts as an endoribonuclease during lytic infection. Degrades host mRNAs in the cytoplasm by cutting them at preferred sites, including some in regions of translation initiation. Together with inhibition of host splicing by ICP27, contributes to an overall decrease in host protein synthesis. Also, after the onset of viral transcription, accelerates the turnover of viral mRNA, thereby facilitating the sequential expression of different classes of viral genes. Binds translation initiation factors eIF4H, eIF4AI, and eIF4AII, thereby may interact directly with the translation initiation complex and thus digest specifically mRNAs. Also impedes antigen presentation by major histocompatibility complex class I and class II molecules, inhibits secretion of cytokines that would otherwise recruit lymphocytes and neutrophils cells to the site of infection and blocks the activation of dendritic cells. Impedes the alpha/beta interferon-mediated response to infection by evading the cGAS/ STING-mediated DNA-sensing pathway and degrading CGAS via its RNase activity.</text>
</comment>
<comment type="subunit">
    <text evidence="1">Interacts with human EIF4H, EIF4A1 and EIF4A2; interaction with eIF4AI and EIF4A2 presumably allows Vhs protein to associate with the eIF4F cap-binding complex.</text>
</comment>
<comment type="subcellular location">
    <subcellularLocation>
        <location evidence="5">Virion</location>
    </subcellularLocation>
</comment>
<comment type="similarity">
    <text evidence="5">Belongs to the herpesviridae VHS protein family.</text>
</comment>
<name>SHUT_HHV1K</name>
<feature type="chain" id="PRO_0000283698" description="Virion host shutoff protein">
    <location>
        <begin position="1"/>
        <end position="489"/>
    </location>
</feature>
<feature type="region of interest" description="Disordered" evidence="2">
    <location>
        <begin position="110"/>
        <end position="135"/>
    </location>
</feature>
<feature type="region of interest" description="Disordered" evidence="2">
    <location>
        <begin position="142"/>
        <end position="161"/>
    </location>
</feature>
<feature type="region of interest" description="Disordered" evidence="2">
    <location>
        <begin position="285"/>
        <end position="316"/>
    </location>
</feature>
<feature type="region of interest" description="Disordered" evidence="2">
    <location>
        <begin position="333"/>
        <end position="363"/>
    </location>
</feature>
<feature type="compositionally biased region" description="Polar residues" evidence="2">
    <location>
        <begin position="124"/>
        <end position="134"/>
    </location>
</feature>
<feature type="mutagenesis site" description="No effect on human eIF4H binding." evidence="3">
    <original>D</original>
    <variation>N</variation>
    <location>
        <position position="34"/>
    </location>
</feature>
<feature type="mutagenesis site" description="No effect on human eIF4H binding." evidence="3">
    <original>D</original>
    <variation>N</variation>
    <location>
        <position position="82"/>
    </location>
</feature>
<feature type="mutagenesis site" description="No effect on human eIF4H binding." evidence="3">
    <original>E</original>
    <variation>Q</variation>
    <location>
        <position position="192"/>
    </location>
</feature>
<feature type="mutagenesis site" description="No effect on human eIF4H binding." evidence="3">
    <original>D</original>
    <variation>N</variation>
    <location>
        <position position="194"/>
    </location>
</feature>
<feature type="mutagenesis site" description="No effect on human eIF4H binding." evidence="3">
    <original>D</original>
    <variation>N</variation>
    <location>
        <position position="195"/>
    </location>
</feature>
<feature type="mutagenesis site" description="Complete loss of human eIF4H binding." evidence="3">
    <original>T</original>
    <variation>A</variation>
    <location>
        <position position="211"/>
    </location>
</feature>
<feature type="mutagenesis site" description="No effect on human eIF4H binding." evidence="3">
    <original>T</original>
    <variation>S</variation>
    <location>
        <position position="211"/>
    </location>
</feature>
<feature type="mutagenesis site" description="No effect on human eIF4H binding." evidence="3">
    <original>D</original>
    <variation>N</variation>
    <location>
        <position position="213"/>
    </location>
</feature>
<feature type="mutagenesis site" description="Complete loss of human eIF4H binding." evidence="3">
    <original>T</original>
    <variation>I</variation>
    <location>
        <position position="214"/>
    </location>
</feature>
<feature type="mutagenesis site" description="No effect on human eIF4H binding." evidence="3">
    <original>D</original>
    <variation>N</variation>
    <location>
        <position position="215"/>
    </location>
</feature>
<feature type="mutagenesis site" description="No effect on human eIF4H binding." evidence="3">
    <original>D</original>
    <variation>N</variation>
    <location>
        <position position="261"/>
    </location>
</feature>
<feature type="mutagenesis site" description="Complete loss of human eIF4H binding." evidence="3">
    <original>R</original>
    <variation>H</variation>
    <location>
        <position position="435"/>
    </location>
</feature>
<proteinExistence type="evidence at protein level"/>
<organismHost>
    <name type="scientific">Homo sapiens</name>
    <name type="common">Human</name>
    <dbReference type="NCBI Taxonomy" id="9606"/>
</organismHost>
<protein>
    <recommendedName>
        <fullName>Virion host shutoff protein</fullName>
        <shortName>Vhs</shortName>
        <ecNumber>3.1.27.-</ecNumber>
    </recommendedName>
</protein>